<comment type="function">
    <text evidence="1">Involved in the maturation of [NiFe] hydrogenases. Required for nickel insertion into the metal center of the hydrogenase.</text>
</comment>
<comment type="similarity">
    <text evidence="1">Belongs to the HypA/HybF family.</text>
</comment>
<organism>
    <name type="scientific">Shewanella halifaxensis (strain HAW-EB4)</name>
    <dbReference type="NCBI Taxonomy" id="458817"/>
    <lineage>
        <taxon>Bacteria</taxon>
        <taxon>Pseudomonadati</taxon>
        <taxon>Pseudomonadota</taxon>
        <taxon>Gammaproteobacteria</taxon>
        <taxon>Alteromonadales</taxon>
        <taxon>Shewanellaceae</taxon>
        <taxon>Shewanella</taxon>
    </lineage>
</organism>
<reference key="1">
    <citation type="submission" date="2008-01" db="EMBL/GenBank/DDBJ databases">
        <title>Complete sequence of Shewanella halifaxensis HAW-EB4.</title>
        <authorList>
            <consortium name="US DOE Joint Genome Institute"/>
            <person name="Copeland A."/>
            <person name="Lucas S."/>
            <person name="Lapidus A."/>
            <person name="Glavina del Rio T."/>
            <person name="Dalin E."/>
            <person name="Tice H."/>
            <person name="Bruce D."/>
            <person name="Goodwin L."/>
            <person name="Pitluck S."/>
            <person name="Sims D."/>
            <person name="Brettin T."/>
            <person name="Detter J.C."/>
            <person name="Han C."/>
            <person name="Kuske C.R."/>
            <person name="Schmutz J."/>
            <person name="Larimer F."/>
            <person name="Land M."/>
            <person name="Hauser L."/>
            <person name="Kyrpides N."/>
            <person name="Kim E."/>
            <person name="Zhao J.-S."/>
            <person name="Richardson P."/>
        </authorList>
    </citation>
    <scope>NUCLEOTIDE SEQUENCE [LARGE SCALE GENOMIC DNA]</scope>
    <source>
        <strain>HAW-EB4</strain>
    </source>
</reference>
<feature type="chain" id="PRO_1000078041" description="Hydrogenase maturation factor HypA">
    <location>
        <begin position="1"/>
        <end position="115"/>
    </location>
</feature>
<feature type="binding site" evidence="1">
    <location>
        <position position="2"/>
    </location>
    <ligand>
        <name>Ni(2+)</name>
        <dbReference type="ChEBI" id="CHEBI:49786"/>
    </ligand>
</feature>
<feature type="binding site" evidence="1">
    <location>
        <position position="73"/>
    </location>
    <ligand>
        <name>Zn(2+)</name>
        <dbReference type="ChEBI" id="CHEBI:29105"/>
    </ligand>
</feature>
<feature type="binding site" evidence="1">
    <location>
        <position position="76"/>
    </location>
    <ligand>
        <name>Zn(2+)</name>
        <dbReference type="ChEBI" id="CHEBI:29105"/>
    </ligand>
</feature>
<feature type="binding site" evidence="1">
    <location>
        <position position="89"/>
    </location>
    <ligand>
        <name>Zn(2+)</name>
        <dbReference type="ChEBI" id="CHEBI:29105"/>
    </ligand>
</feature>
<feature type="binding site" evidence="1">
    <location>
        <position position="92"/>
    </location>
    <ligand>
        <name>Zn(2+)</name>
        <dbReference type="ChEBI" id="CHEBI:29105"/>
    </ligand>
</feature>
<evidence type="ECO:0000255" key="1">
    <source>
        <dbReference type="HAMAP-Rule" id="MF_00213"/>
    </source>
</evidence>
<sequence>MHEYSIVTALIEECERHAFANNASKVSRVEIKLGILSGVEPELLRTAFETFKLEGICREANLVMNIQPLVLRCLDCGQSTEHSERSVICSHCQSGQTKVLDGEDMMLMQLELEQA</sequence>
<gene>
    <name evidence="1" type="primary">hypA</name>
    <name type="ordered locus">Shal_2271</name>
</gene>
<proteinExistence type="inferred from homology"/>
<dbReference type="EMBL" id="CP000931">
    <property type="protein sequence ID" value="ABZ76830.1"/>
    <property type="molecule type" value="Genomic_DNA"/>
</dbReference>
<dbReference type="RefSeq" id="WP_012277359.1">
    <property type="nucleotide sequence ID" value="NC_010334.1"/>
</dbReference>
<dbReference type="SMR" id="B0TVE5"/>
<dbReference type="STRING" id="458817.Shal_2271"/>
<dbReference type="KEGG" id="shl:Shal_2271"/>
<dbReference type="eggNOG" id="COG0375">
    <property type="taxonomic scope" value="Bacteria"/>
</dbReference>
<dbReference type="HOGENOM" id="CLU_126929_6_0_6"/>
<dbReference type="OrthoDB" id="288014at2"/>
<dbReference type="Proteomes" id="UP000001317">
    <property type="component" value="Chromosome"/>
</dbReference>
<dbReference type="GO" id="GO:0016151">
    <property type="term" value="F:nickel cation binding"/>
    <property type="evidence" value="ECO:0007669"/>
    <property type="project" value="UniProtKB-UniRule"/>
</dbReference>
<dbReference type="GO" id="GO:0008270">
    <property type="term" value="F:zinc ion binding"/>
    <property type="evidence" value="ECO:0007669"/>
    <property type="project" value="UniProtKB-UniRule"/>
</dbReference>
<dbReference type="GO" id="GO:0051604">
    <property type="term" value="P:protein maturation"/>
    <property type="evidence" value="ECO:0007669"/>
    <property type="project" value="InterPro"/>
</dbReference>
<dbReference type="GO" id="GO:0036211">
    <property type="term" value="P:protein modification process"/>
    <property type="evidence" value="ECO:0007669"/>
    <property type="project" value="UniProtKB-UniRule"/>
</dbReference>
<dbReference type="Gene3D" id="3.30.2320.80">
    <property type="match status" value="1"/>
</dbReference>
<dbReference type="HAMAP" id="MF_00213">
    <property type="entry name" value="HypA_HybF"/>
    <property type="match status" value="1"/>
</dbReference>
<dbReference type="InterPro" id="IPR000688">
    <property type="entry name" value="HypA/HybF"/>
</dbReference>
<dbReference type="PANTHER" id="PTHR34535">
    <property type="entry name" value="HYDROGENASE MATURATION FACTOR HYPA"/>
    <property type="match status" value="1"/>
</dbReference>
<dbReference type="PANTHER" id="PTHR34535:SF3">
    <property type="entry name" value="HYDROGENASE MATURATION FACTOR HYPA"/>
    <property type="match status" value="1"/>
</dbReference>
<dbReference type="Pfam" id="PF01155">
    <property type="entry name" value="HypA"/>
    <property type="match status" value="1"/>
</dbReference>
<dbReference type="PIRSF" id="PIRSF004761">
    <property type="entry name" value="Hydrgn_mat_HypA"/>
    <property type="match status" value="1"/>
</dbReference>
<keyword id="KW-0479">Metal-binding</keyword>
<keyword id="KW-0533">Nickel</keyword>
<keyword id="KW-0862">Zinc</keyword>
<accession>B0TVE5</accession>
<name>HYPA_SHEHH</name>
<protein>
    <recommendedName>
        <fullName evidence="1">Hydrogenase maturation factor HypA</fullName>
    </recommendedName>
</protein>